<evidence type="ECO:0000255" key="1">
    <source>
        <dbReference type="HAMAP-Rule" id="MF_00190"/>
    </source>
</evidence>
<gene>
    <name evidence="1" type="primary">clsA</name>
    <name type="synonym">cls</name>
    <name type="ordered locus">Psyr_5079</name>
</gene>
<keyword id="KW-0997">Cell inner membrane</keyword>
<keyword id="KW-1003">Cell membrane</keyword>
<keyword id="KW-0444">Lipid biosynthesis</keyword>
<keyword id="KW-0443">Lipid metabolism</keyword>
<keyword id="KW-0472">Membrane</keyword>
<keyword id="KW-0594">Phospholipid biosynthesis</keyword>
<keyword id="KW-1208">Phospholipid metabolism</keyword>
<keyword id="KW-0677">Repeat</keyword>
<keyword id="KW-0808">Transferase</keyword>
<keyword id="KW-0812">Transmembrane</keyword>
<keyword id="KW-1133">Transmembrane helix</keyword>
<dbReference type="EC" id="2.7.8.-" evidence="1"/>
<dbReference type="EMBL" id="CP000075">
    <property type="protein sequence ID" value="AAY40106.1"/>
    <property type="molecule type" value="Genomic_DNA"/>
</dbReference>
<dbReference type="RefSeq" id="WP_003340260.1">
    <property type="nucleotide sequence ID" value="NC_007005.1"/>
</dbReference>
<dbReference type="RefSeq" id="YP_238144.1">
    <property type="nucleotide sequence ID" value="NC_007005.1"/>
</dbReference>
<dbReference type="SMR" id="Q4ZL66"/>
<dbReference type="STRING" id="205918.Psyr_5079"/>
<dbReference type="KEGG" id="psb:Psyr_5079"/>
<dbReference type="PATRIC" id="fig|205918.7.peg.5239"/>
<dbReference type="eggNOG" id="COG1502">
    <property type="taxonomic scope" value="Bacteria"/>
</dbReference>
<dbReference type="HOGENOM" id="CLU_038053_1_0_6"/>
<dbReference type="OrthoDB" id="9762009at2"/>
<dbReference type="Proteomes" id="UP000000426">
    <property type="component" value="Chromosome"/>
</dbReference>
<dbReference type="GO" id="GO:0005886">
    <property type="term" value="C:plasma membrane"/>
    <property type="evidence" value="ECO:0007669"/>
    <property type="project" value="UniProtKB-SubCell"/>
</dbReference>
<dbReference type="GO" id="GO:0008808">
    <property type="term" value="F:cardiolipin synthase activity"/>
    <property type="evidence" value="ECO:0007669"/>
    <property type="project" value="InterPro"/>
</dbReference>
<dbReference type="GO" id="GO:0032049">
    <property type="term" value="P:cardiolipin biosynthetic process"/>
    <property type="evidence" value="ECO:0007669"/>
    <property type="project" value="InterPro"/>
</dbReference>
<dbReference type="CDD" id="cd09155">
    <property type="entry name" value="PLDc_PaCLS_like_1"/>
    <property type="match status" value="1"/>
</dbReference>
<dbReference type="FunFam" id="3.30.870.10:FF:000014">
    <property type="entry name" value="Cardiolipin synthase"/>
    <property type="match status" value="1"/>
</dbReference>
<dbReference type="FunFam" id="3.30.870.10:FF:000021">
    <property type="entry name" value="Cardiolipin synthase"/>
    <property type="match status" value="1"/>
</dbReference>
<dbReference type="Gene3D" id="3.30.870.10">
    <property type="entry name" value="Endonuclease Chain A"/>
    <property type="match status" value="2"/>
</dbReference>
<dbReference type="HAMAP" id="MF_00190">
    <property type="entry name" value="Cardiolipin_synth_ClsA"/>
    <property type="match status" value="1"/>
</dbReference>
<dbReference type="InterPro" id="IPR022924">
    <property type="entry name" value="Cardiolipin_synthase"/>
</dbReference>
<dbReference type="InterPro" id="IPR030840">
    <property type="entry name" value="CL_synthase_A"/>
</dbReference>
<dbReference type="InterPro" id="IPR027379">
    <property type="entry name" value="CLS_N"/>
</dbReference>
<dbReference type="InterPro" id="IPR025202">
    <property type="entry name" value="PLD-like_dom"/>
</dbReference>
<dbReference type="InterPro" id="IPR001736">
    <property type="entry name" value="PLipase_D/transphosphatidylase"/>
</dbReference>
<dbReference type="NCBIfam" id="TIGR04265">
    <property type="entry name" value="bac_cardiolipin"/>
    <property type="match status" value="1"/>
</dbReference>
<dbReference type="PANTHER" id="PTHR21248">
    <property type="entry name" value="CARDIOLIPIN SYNTHASE"/>
    <property type="match status" value="1"/>
</dbReference>
<dbReference type="PANTHER" id="PTHR21248:SF22">
    <property type="entry name" value="PHOSPHOLIPASE D"/>
    <property type="match status" value="1"/>
</dbReference>
<dbReference type="Pfam" id="PF13091">
    <property type="entry name" value="PLDc_2"/>
    <property type="match status" value="2"/>
</dbReference>
<dbReference type="Pfam" id="PF13396">
    <property type="entry name" value="PLDc_N"/>
    <property type="match status" value="1"/>
</dbReference>
<dbReference type="SMART" id="SM00155">
    <property type="entry name" value="PLDc"/>
    <property type="match status" value="2"/>
</dbReference>
<dbReference type="SUPFAM" id="SSF56024">
    <property type="entry name" value="Phospholipase D/nuclease"/>
    <property type="match status" value="2"/>
</dbReference>
<dbReference type="PROSITE" id="PS50035">
    <property type="entry name" value="PLD"/>
    <property type="match status" value="2"/>
</dbReference>
<organism>
    <name type="scientific">Pseudomonas syringae pv. syringae (strain B728a)</name>
    <dbReference type="NCBI Taxonomy" id="205918"/>
    <lineage>
        <taxon>Bacteria</taxon>
        <taxon>Pseudomonadati</taxon>
        <taxon>Pseudomonadota</taxon>
        <taxon>Gammaproteobacteria</taxon>
        <taxon>Pseudomonadales</taxon>
        <taxon>Pseudomonadaceae</taxon>
        <taxon>Pseudomonas</taxon>
        <taxon>Pseudomonas syringae</taxon>
    </lineage>
</organism>
<sequence length="479" mass="53725">MDYHDPYFFGYVLGFIHLLGTGAAIHALLTVRTSQGAIAWAMPLLFIPYFTLLPYLVFGRSSFDAYIKARRQANQEMRIAIGDLNWRPWMEEAVAARRSEAYAALRAMPKLGNMPALANNKVKLLINGEETFGAIFQAIREAKKTILVQFFIIHDDKLGRELQSLLLEKAAEGVAIFVLYDRIGSHALPGAYIDKLRDGGVQIKAFATRGGWLNRFQINFRNHRKIVVVDGLKGYIGGHNVGDEYMGLKPPLAPWRDTHVQVIGPVVACLQESFAEDWFWATRELPPLSLPDEFPEDGVLCQLLTSGPADAQETCSLFFVEAIHAAEERVWITSPYFIPDEAVTAALTLAVLRGVDVRLLLPSRPDHYVVYAASSLYAFDAVRAGVRVFRYEPGFLHQKVVLVDNEITAIGSANLDNRSFRLNFELMLLTVDSDFSSQVESMLTADFNLAREISVQESHETRRLHQLGMRVARLISPIL</sequence>
<protein>
    <recommendedName>
        <fullName evidence="1">Cardiolipin synthase A</fullName>
        <shortName evidence="1">CL synthase</shortName>
        <ecNumber evidence="1">2.7.8.-</ecNumber>
    </recommendedName>
</protein>
<proteinExistence type="inferred from homology"/>
<feature type="chain" id="PRO_1000077504" description="Cardiolipin synthase A">
    <location>
        <begin position="1"/>
        <end position="479"/>
    </location>
</feature>
<feature type="transmembrane region" description="Helical" evidence="1">
    <location>
        <begin position="8"/>
        <end position="28"/>
    </location>
</feature>
<feature type="transmembrane region" description="Helical" evidence="1">
    <location>
        <begin position="38"/>
        <end position="58"/>
    </location>
</feature>
<feature type="domain" description="PLD phosphodiesterase 1" evidence="1">
    <location>
        <begin position="218"/>
        <end position="245"/>
    </location>
</feature>
<feature type="domain" description="PLD phosphodiesterase 2" evidence="1">
    <location>
        <begin position="392"/>
        <end position="419"/>
    </location>
</feature>
<feature type="active site" evidence="1">
    <location>
        <position position="223"/>
    </location>
</feature>
<feature type="active site" evidence="1">
    <location>
        <position position="225"/>
    </location>
</feature>
<feature type="active site" evidence="1">
    <location>
        <position position="230"/>
    </location>
</feature>
<feature type="active site" evidence="1">
    <location>
        <position position="397"/>
    </location>
</feature>
<feature type="active site" evidence="1">
    <location>
        <position position="399"/>
    </location>
</feature>
<feature type="active site" evidence="1">
    <location>
        <position position="404"/>
    </location>
</feature>
<accession>Q4ZL66</accession>
<name>CLSA_PSEU2</name>
<comment type="function">
    <text evidence="1">Catalyzes the reversible phosphatidyl group transfer from one phosphatidylglycerol molecule to another to form cardiolipin (CL) (diphosphatidylglycerol) and glycerol.</text>
</comment>
<comment type="catalytic activity">
    <reaction evidence="1">
        <text>2 a 1,2-diacyl-sn-glycero-3-phospho-(1'-sn-glycerol) = a cardiolipin + glycerol</text>
        <dbReference type="Rhea" id="RHEA:31451"/>
        <dbReference type="ChEBI" id="CHEBI:17754"/>
        <dbReference type="ChEBI" id="CHEBI:62237"/>
        <dbReference type="ChEBI" id="CHEBI:64716"/>
    </reaction>
</comment>
<comment type="subcellular location">
    <subcellularLocation>
        <location evidence="1">Cell inner membrane</location>
        <topology evidence="1">Multi-pass membrane protein</topology>
    </subcellularLocation>
</comment>
<comment type="similarity">
    <text evidence="1">Belongs to the phospholipase D family. Cardiolipin synthase subfamily. ClsA sub-subfamily.</text>
</comment>
<reference key="1">
    <citation type="journal article" date="2005" name="Proc. Natl. Acad. Sci. U.S.A.">
        <title>Comparison of the complete genome sequences of Pseudomonas syringae pv. syringae B728a and pv. tomato DC3000.</title>
        <authorList>
            <person name="Feil H."/>
            <person name="Feil W.S."/>
            <person name="Chain P."/>
            <person name="Larimer F."/>
            <person name="Dibartolo G."/>
            <person name="Copeland A."/>
            <person name="Lykidis A."/>
            <person name="Trong S."/>
            <person name="Nolan M."/>
            <person name="Goltsman E."/>
            <person name="Thiel J."/>
            <person name="Malfatti S."/>
            <person name="Loper J.E."/>
            <person name="Lapidus A."/>
            <person name="Detter J.C."/>
            <person name="Land M."/>
            <person name="Richardson P.M."/>
            <person name="Kyrpides N.C."/>
            <person name="Ivanova N."/>
            <person name="Lindow S.E."/>
        </authorList>
    </citation>
    <scope>NUCLEOTIDE SEQUENCE [LARGE SCALE GENOMIC DNA]</scope>
    <source>
        <strain>B728a</strain>
    </source>
</reference>